<proteinExistence type="inferred from homology"/>
<comment type="similarity">
    <text evidence="2">Belongs to the class-II pyridine nucleotide-disulfide oxidoreductase family.</text>
</comment>
<dbReference type="EC" id="1.8.1.-"/>
<dbReference type="EMBL" id="M60116">
    <property type="protein sequence ID" value="AAA23276.1"/>
    <property type="molecule type" value="Genomic_DNA"/>
</dbReference>
<dbReference type="PIR" id="S29117">
    <property type="entry name" value="S29117"/>
</dbReference>
<dbReference type="RefSeq" id="WP_003447690.1">
    <property type="nucleotide sequence ID" value="NZ_CP112872.1"/>
</dbReference>
<dbReference type="SMR" id="P23160"/>
<dbReference type="GeneID" id="93075896"/>
<dbReference type="OrthoDB" id="9806179at2"/>
<dbReference type="GO" id="GO:0005737">
    <property type="term" value="C:cytoplasm"/>
    <property type="evidence" value="ECO:0007669"/>
    <property type="project" value="InterPro"/>
</dbReference>
<dbReference type="GO" id="GO:0004791">
    <property type="term" value="F:thioredoxin-disulfide reductase (NADPH) activity"/>
    <property type="evidence" value="ECO:0007669"/>
    <property type="project" value="InterPro"/>
</dbReference>
<dbReference type="GO" id="GO:0019430">
    <property type="term" value="P:removal of superoxide radicals"/>
    <property type="evidence" value="ECO:0007669"/>
    <property type="project" value="InterPro"/>
</dbReference>
<dbReference type="Gene3D" id="3.50.50.60">
    <property type="entry name" value="FAD/NAD(P)-binding domain"/>
    <property type="match status" value="2"/>
</dbReference>
<dbReference type="InterPro" id="IPR036188">
    <property type="entry name" value="FAD/NAD-bd_sf"/>
</dbReference>
<dbReference type="InterPro" id="IPR023753">
    <property type="entry name" value="FAD/NAD-binding_dom"/>
</dbReference>
<dbReference type="InterPro" id="IPR050097">
    <property type="entry name" value="Ferredoxin-NADP_redctase_2"/>
</dbReference>
<dbReference type="InterPro" id="IPR008255">
    <property type="entry name" value="Pyr_nucl-diS_OxRdtase_2_AS"/>
</dbReference>
<dbReference type="InterPro" id="IPR005982">
    <property type="entry name" value="Thioredox_Rdtase"/>
</dbReference>
<dbReference type="NCBIfam" id="TIGR01292">
    <property type="entry name" value="TRX_reduct"/>
    <property type="match status" value="1"/>
</dbReference>
<dbReference type="PANTHER" id="PTHR48105">
    <property type="entry name" value="THIOREDOXIN REDUCTASE 1-RELATED-RELATED"/>
    <property type="match status" value="1"/>
</dbReference>
<dbReference type="Pfam" id="PF07992">
    <property type="entry name" value="Pyr_redox_2"/>
    <property type="match status" value="1"/>
</dbReference>
<dbReference type="PRINTS" id="PR00368">
    <property type="entry name" value="FADPNR"/>
</dbReference>
<dbReference type="PRINTS" id="PR00469">
    <property type="entry name" value="PNDRDTASEII"/>
</dbReference>
<dbReference type="SUPFAM" id="SSF51905">
    <property type="entry name" value="FAD/NAD(P)-binding domain"/>
    <property type="match status" value="1"/>
</dbReference>
<dbReference type="PROSITE" id="PS00573">
    <property type="entry name" value="PYRIDINE_REDOX_2"/>
    <property type="match status" value="1"/>
</dbReference>
<sequence>MKEEKQLDLVIIGAGPAGLTAAIYAIRAKLNTLVLENELVGGQIRETYTVENFPGFNVISGADLADKMEEHAASIGVNIDQFSNIEKIKLSDDEKIIETEDVIYKVKALIIATGAKSRRLPIPEEEKLHGKVIHYCELCDGALYQGKDLVVVGGGNSAVEAAIFLTKYARNITIVHQFDYLQAQKYSQDELFKHKNVKIIWDSEIRNIVGENEIEKIVVENVKTKQKTELKADGVFVYIGYEPKTELFKDSININKWGYIETDENMETNIKGVFAAGDVRSKLIRQLTTAVSDGTVAALMAEKYIGGK</sequence>
<protein>
    <recommendedName>
        <fullName>34.2 kDa protein in rubredoxin operon</fullName>
        <ecNumber>1.8.1.-</ecNumber>
    </recommendedName>
    <alternativeName>
        <fullName>ORF A</fullName>
    </alternativeName>
</protein>
<accession>P23160</accession>
<organism>
    <name type="scientific">Clostridium pasteurianum</name>
    <dbReference type="NCBI Taxonomy" id="1501"/>
    <lineage>
        <taxon>Bacteria</taxon>
        <taxon>Bacillati</taxon>
        <taxon>Bacillota</taxon>
        <taxon>Clostridia</taxon>
        <taxon>Eubacteriales</taxon>
        <taxon>Clostridiaceae</taxon>
        <taxon>Clostridium</taxon>
    </lineage>
</organism>
<feature type="chain" id="PRO_0000166790" description="34.2 kDa protein in rubredoxin operon">
    <location>
        <begin position="1"/>
        <end position="308"/>
    </location>
</feature>
<feature type="binding site" evidence="1">
    <location>
        <begin position="268"/>
        <end position="278"/>
    </location>
    <ligand>
        <name>FAD</name>
        <dbReference type="ChEBI" id="CHEBI:57692"/>
    </ligand>
</feature>
<feature type="disulfide bond" description="Redox-active" evidence="1">
    <location>
        <begin position="136"/>
        <end position="139"/>
    </location>
</feature>
<evidence type="ECO:0000250" key="1"/>
<evidence type="ECO:0000305" key="2"/>
<keyword id="KW-1015">Disulfide bond</keyword>
<keyword id="KW-0274">FAD</keyword>
<keyword id="KW-0285">Flavoprotein</keyword>
<keyword id="KW-0520">NAD</keyword>
<keyword id="KW-0521">NADP</keyword>
<keyword id="KW-0560">Oxidoreductase</keyword>
<keyword id="KW-0676">Redox-active center</keyword>
<name>R34K_CLOPA</name>
<reference key="1">
    <citation type="journal article" date="1992" name="Biochem. J.">
        <title>Cloning, sequencing and expression in Escherichia coli of the rubredoxin gene from Clostridium pasteurianum.</title>
        <authorList>
            <person name="Mathieu I."/>
            <person name="Meyer J."/>
            <person name="Moulis J.-M."/>
        </authorList>
    </citation>
    <scope>NUCLEOTIDE SEQUENCE [GENOMIC DNA]</scope>
</reference>